<feature type="transit peptide" description="Mitochondrion" evidence="5">
    <location>
        <begin position="1"/>
        <end position="62"/>
    </location>
</feature>
<feature type="chain" id="PRO_0000033318" description="Steroidogenic acute regulatory protein, mitochondrial">
    <location>
        <begin position="63"/>
        <end position="284"/>
    </location>
</feature>
<feature type="domain" description="START" evidence="3">
    <location>
        <begin position="66"/>
        <end position="279"/>
    </location>
</feature>
<feature type="modified residue" description="Phosphoserine; by PKA" evidence="1">
    <location>
        <position position="56"/>
    </location>
</feature>
<feature type="modified residue" description="Phosphoserine; by PKA" evidence="1">
    <location>
        <position position="194"/>
    </location>
</feature>
<feature type="sequence conflict" description="In Ref. 3; BAB31842." evidence="7" ref="3">
    <original>R</original>
    <variation>H</variation>
    <location>
        <position position="139"/>
    </location>
</feature>
<proteinExistence type="evidence at protein level"/>
<reference key="1">
    <citation type="journal article" date="1994" name="J. Biol. Chem.">
        <title>The purification, cloning, and expression of a novel luteinizing hormone-induced mitochondrial protein in MA-10 mouse Leydig tumor cells. Characterization of the steroidogenic acute regulatory protein (StAR).</title>
        <authorList>
            <person name="Clark B.J."/>
            <person name="Wells J."/>
            <person name="King S.R."/>
            <person name="Stocco D.M."/>
        </authorList>
    </citation>
    <scope>NUCLEOTIDE SEQUENCE [MRNA]</scope>
    <scope>PARTIAL PROTEIN SEQUENCE</scope>
    <scope>SUBCELLULAR LOCATION</scope>
</reference>
<reference key="2">
    <citation type="journal article" date="2002" name="J. Neurosci.">
        <title>An essential component in steroid synthesis, the steroidogenic acute regulatory protein, is expressed in discrete regions of the brain.</title>
        <authorList>
            <person name="King S.R."/>
            <person name="Manna P.R."/>
            <person name="Ishii T."/>
            <person name="Syapin P.J."/>
            <person name="Ginsberg S.D."/>
            <person name="Wilson K."/>
            <person name="Walsh L.P."/>
            <person name="Parker K.L."/>
            <person name="Stocco D.M."/>
            <person name="Smith R.G."/>
            <person name="Lamb D.J."/>
        </authorList>
    </citation>
    <scope>NUCLEOTIDE SEQUENCE [GENOMIC DNA]</scope>
    <scope>TISSUE SPECIFICITY</scope>
    <source>
        <strain>129</strain>
    </source>
</reference>
<reference key="3">
    <citation type="journal article" date="2005" name="Science">
        <title>The transcriptional landscape of the mammalian genome.</title>
        <authorList>
            <person name="Carninci P."/>
            <person name="Kasukawa T."/>
            <person name="Katayama S."/>
            <person name="Gough J."/>
            <person name="Frith M.C."/>
            <person name="Maeda N."/>
            <person name="Oyama R."/>
            <person name="Ravasi T."/>
            <person name="Lenhard B."/>
            <person name="Wells C."/>
            <person name="Kodzius R."/>
            <person name="Shimokawa K."/>
            <person name="Bajic V.B."/>
            <person name="Brenner S.E."/>
            <person name="Batalov S."/>
            <person name="Forrest A.R."/>
            <person name="Zavolan M."/>
            <person name="Davis M.J."/>
            <person name="Wilming L.G."/>
            <person name="Aidinis V."/>
            <person name="Allen J.E."/>
            <person name="Ambesi-Impiombato A."/>
            <person name="Apweiler R."/>
            <person name="Aturaliya R.N."/>
            <person name="Bailey T.L."/>
            <person name="Bansal M."/>
            <person name="Baxter L."/>
            <person name="Beisel K.W."/>
            <person name="Bersano T."/>
            <person name="Bono H."/>
            <person name="Chalk A.M."/>
            <person name="Chiu K.P."/>
            <person name="Choudhary V."/>
            <person name="Christoffels A."/>
            <person name="Clutterbuck D.R."/>
            <person name="Crowe M.L."/>
            <person name="Dalla E."/>
            <person name="Dalrymple B.P."/>
            <person name="de Bono B."/>
            <person name="Della Gatta G."/>
            <person name="di Bernardo D."/>
            <person name="Down T."/>
            <person name="Engstrom P."/>
            <person name="Fagiolini M."/>
            <person name="Faulkner G."/>
            <person name="Fletcher C.F."/>
            <person name="Fukushima T."/>
            <person name="Furuno M."/>
            <person name="Futaki S."/>
            <person name="Gariboldi M."/>
            <person name="Georgii-Hemming P."/>
            <person name="Gingeras T.R."/>
            <person name="Gojobori T."/>
            <person name="Green R.E."/>
            <person name="Gustincich S."/>
            <person name="Harbers M."/>
            <person name="Hayashi Y."/>
            <person name="Hensch T.K."/>
            <person name="Hirokawa N."/>
            <person name="Hill D."/>
            <person name="Huminiecki L."/>
            <person name="Iacono M."/>
            <person name="Ikeo K."/>
            <person name="Iwama A."/>
            <person name="Ishikawa T."/>
            <person name="Jakt M."/>
            <person name="Kanapin A."/>
            <person name="Katoh M."/>
            <person name="Kawasawa Y."/>
            <person name="Kelso J."/>
            <person name="Kitamura H."/>
            <person name="Kitano H."/>
            <person name="Kollias G."/>
            <person name="Krishnan S.P."/>
            <person name="Kruger A."/>
            <person name="Kummerfeld S.K."/>
            <person name="Kurochkin I.V."/>
            <person name="Lareau L.F."/>
            <person name="Lazarevic D."/>
            <person name="Lipovich L."/>
            <person name="Liu J."/>
            <person name="Liuni S."/>
            <person name="McWilliam S."/>
            <person name="Madan Babu M."/>
            <person name="Madera M."/>
            <person name="Marchionni L."/>
            <person name="Matsuda H."/>
            <person name="Matsuzawa S."/>
            <person name="Miki H."/>
            <person name="Mignone F."/>
            <person name="Miyake S."/>
            <person name="Morris K."/>
            <person name="Mottagui-Tabar S."/>
            <person name="Mulder N."/>
            <person name="Nakano N."/>
            <person name="Nakauchi H."/>
            <person name="Ng P."/>
            <person name="Nilsson R."/>
            <person name="Nishiguchi S."/>
            <person name="Nishikawa S."/>
            <person name="Nori F."/>
            <person name="Ohara O."/>
            <person name="Okazaki Y."/>
            <person name="Orlando V."/>
            <person name="Pang K.C."/>
            <person name="Pavan W.J."/>
            <person name="Pavesi G."/>
            <person name="Pesole G."/>
            <person name="Petrovsky N."/>
            <person name="Piazza S."/>
            <person name="Reed J."/>
            <person name="Reid J.F."/>
            <person name="Ring B.Z."/>
            <person name="Ringwald M."/>
            <person name="Rost B."/>
            <person name="Ruan Y."/>
            <person name="Salzberg S.L."/>
            <person name="Sandelin A."/>
            <person name="Schneider C."/>
            <person name="Schoenbach C."/>
            <person name="Sekiguchi K."/>
            <person name="Semple C.A."/>
            <person name="Seno S."/>
            <person name="Sessa L."/>
            <person name="Sheng Y."/>
            <person name="Shibata Y."/>
            <person name="Shimada H."/>
            <person name="Shimada K."/>
            <person name="Silva D."/>
            <person name="Sinclair B."/>
            <person name="Sperling S."/>
            <person name="Stupka E."/>
            <person name="Sugiura K."/>
            <person name="Sultana R."/>
            <person name="Takenaka Y."/>
            <person name="Taki K."/>
            <person name="Tammoja K."/>
            <person name="Tan S.L."/>
            <person name="Tang S."/>
            <person name="Taylor M.S."/>
            <person name="Tegner J."/>
            <person name="Teichmann S.A."/>
            <person name="Ueda H.R."/>
            <person name="van Nimwegen E."/>
            <person name="Verardo R."/>
            <person name="Wei C.L."/>
            <person name="Yagi K."/>
            <person name="Yamanishi H."/>
            <person name="Zabarovsky E."/>
            <person name="Zhu S."/>
            <person name="Zimmer A."/>
            <person name="Hide W."/>
            <person name="Bult C."/>
            <person name="Grimmond S.M."/>
            <person name="Teasdale R.D."/>
            <person name="Liu E.T."/>
            <person name="Brusic V."/>
            <person name="Quackenbush J."/>
            <person name="Wahlestedt C."/>
            <person name="Mattick J.S."/>
            <person name="Hume D.A."/>
            <person name="Kai C."/>
            <person name="Sasaki D."/>
            <person name="Tomaru Y."/>
            <person name="Fukuda S."/>
            <person name="Kanamori-Katayama M."/>
            <person name="Suzuki M."/>
            <person name="Aoki J."/>
            <person name="Arakawa T."/>
            <person name="Iida J."/>
            <person name="Imamura K."/>
            <person name="Itoh M."/>
            <person name="Kato T."/>
            <person name="Kawaji H."/>
            <person name="Kawagashira N."/>
            <person name="Kawashima T."/>
            <person name="Kojima M."/>
            <person name="Kondo S."/>
            <person name="Konno H."/>
            <person name="Nakano K."/>
            <person name="Ninomiya N."/>
            <person name="Nishio T."/>
            <person name="Okada M."/>
            <person name="Plessy C."/>
            <person name="Shibata K."/>
            <person name="Shiraki T."/>
            <person name="Suzuki S."/>
            <person name="Tagami M."/>
            <person name="Waki K."/>
            <person name="Watahiki A."/>
            <person name="Okamura-Oho Y."/>
            <person name="Suzuki H."/>
            <person name="Kawai J."/>
            <person name="Hayashizaki Y."/>
        </authorList>
    </citation>
    <scope>NUCLEOTIDE SEQUENCE [LARGE SCALE MRNA]</scope>
    <source>
        <strain>C57BL/6J</strain>
        <tissue>Testis</tissue>
    </source>
</reference>
<reference key="4">
    <citation type="journal article" date="2004" name="Genome Res.">
        <title>The status, quality, and expansion of the NIH full-length cDNA project: the Mammalian Gene Collection (MGC).</title>
        <authorList>
            <consortium name="The MGC Project Team"/>
        </authorList>
    </citation>
    <scope>NUCLEOTIDE SEQUENCE [LARGE SCALE MRNA]</scope>
    <source>
        <strain>C57BL/6J</strain>
        <tissue>Embryo</tissue>
    </source>
</reference>
<reference key="5">
    <citation type="journal article" date="1991" name="Mol. Cell. Endocrinol.">
        <title>Acute action of luteinizing hormone on mouse Leydig cells: accumulation of mitochondrial phosphoproteins and stimulation of testosterone synthesis.</title>
        <authorList>
            <person name="Epstein L.F."/>
            <person name="Orme-Johnson N.R."/>
        </authorList>
    </citation>
    <scope>PHOSPHORYLATION</scope>
</reference>
<reference key="6">
    <citation type="journal article" date="1995" name="Endocrinology">
        <title>Steroid production after in vitro transcription, translation, and mitochondrial processing of protein products of complementary deoxyribonucleic acid for steroidogenic acute regulatory protein.</title>
        <authorList>
            <person name="King S.R."/>
            <person name="Ronen-Fuhrmann T."/>
            <person name="Timberg R."/>
            <person name="Clark B.J."/>
            <person name="Orly J."/>
            <person name="Stocco D.M."/>
        </authorList>
    </citation>
    <scope>SUBCELLULAR LOCATION</scope>
    <scope>TRANSIT PEPTIDE CLEAVAGE SITE</scope>
</reference>
<organism>
    <name type="scientific">Mus musculus</name>
    <name type="common">Mouse</name>
    <dbReference type="NCBI Taxonomy" id="10090"/>
    <lineage>
        <taxon>Eukaryota</taxon>
        <taxon>Metazoa</taxon>
        <taxon>Chordata</taxon>
        <taxon>Craniata</taxon>
        <taxon>Vertebrata</taxon>
        <taxon>Euteleostomi</taxon>
        <taxon>Mammalia</taxon>
        <taxon>Eutheria</taxon>
        <taxon>Euarchontoglires</taxon>
        <taxon>Glires</taxon>
        <taxon>Rodentia</taxon>
        <taxon>Myomorpha</taxon>
        <taxon>Muroidea</taxon>
        <taxon>Muridae</taxon>
        <taxon>Murinae</taxon>
        <taxon>Mus</taxon>
        <taxon>Mus</taxon>
    </lineage>
</organism>
<accession>P51557</accession>
<accession>Q543A5</accession>
<accession>Q924Y5</accession>
<accession>Q9D2G1</accession>
<comment type="function">
    <text evidence="1">Plays a key role in steroid hormone synthesis by enhancing the metabolism of cholesterol into pregnenolone. Transporter that binds to and transport cholesterol through the intermembrane space of the mitochondrion.</text>
</comment>
<comment type="catalytic activity">
    <reaction evidence="1">
        <text>cholesterol(in) = cholesterol(out)</text>
        <dbReference type="Rhea" id="RHEA:39747"/>
        <dbReference type="ChEBI" id="CHEBI:16113"/>
    </reaction>
</comment>
<comment type="pathway">
    <text evidence="1">Steroid metabolism; cholesterol metabolism.</text>
</comment>
<comment type="subunit">
    <text evidence="2">May interact with TSPO.</text>
</comment>
<comment type="subcellular location">
    <subcellularLocation>
        <location evidence="5 6">Mitochondrion</location>
    </subcellularLocation>
</comment>
<comment type="tissue specificity">
    <text evidence="4">Expressed within glia and neurons in discrete regions of the brain.</text>
</comment>
<dbReference type="EMBL" id="L36062">
    <property type="protein sequence ID" value="AAB94783.1"/>
    <property type="molecule type" value="mRNA"/>
</dbReference>
<dbReference type="EMBL" id="AY032730">
    <property type="protein sequence ID" value="AAK50433.2"/>
    <property type="molecule type" value="Genomic_DNA"/>
</dbReference>
<dbReference type="EMBL" id="AK019725">
    <property type="protein sequence ID" value="BAB31842.1"/>
    <property type="molecule type" value="mRNA"/>
</dbReference>
<dbReference type="EMBL" id="AK054470">
    <property type="protein sequence ID" value="BAC35791.1"/>
    <property type="molecule type" value="mRNA"/>
</dbReference>
<dbReference type="EMBL" id="AK136327">
    <property type="protein sequence ID" value="BAE22934.1"/>
    <property type="molecule type" value="mRNA"/>
</dbReference>
<dbReference type="EMBL" id="BC082283">
    <property type="protein sequence ID" value="AAH82283.1"/>
    <property type="molecule type" value="mRNA"/>
</dbReference>
<dbReference type="CCDS" id="CCDS22203.1"/>
<dbReference type="PIR" id="A55455">
    <property type="entry name" value="A55455"/>
</dbReference>
<dbReference type="RefSeq" id="NP_035615.2">
    <property type="nucleotide sequence ID" value="NM_011485.5"/>
</dbReference>
<dbReference type="SMR" id="P51557"/>
<dbReference type="FunCoup" id="P51557">
    <property type="interactions" value="96"/>
</dbReference>
<dbReference type="IntAct" id="P51557">
    <property type="interactions" value="1"/>
</dbReference>
<dbReference type="STRING" id="10090.ENSMUSP00000033979"/>
<dbReference type="ChEMBL" id="CHEMBL2029195"/>
<dbReference type="iPTMnet" id="P51557"/>
<dbReference type="PhosphoSitePlus" id="P51557"/>
<dbReference type="PaxDb" id="10090-ENSMUSP00000033979"/>
<dbReference type="ProteomicsDB" id="257368"/>
<dbReference type="Antibodypedia" id="23510">
    <property type="antibodies" value="344 antibodies from 35 providers"/>
</dbReference>
<dbReference type="DNASU" id="20845"/>
<dbReference type="Ensembl" id="ENSMUST00000033979.6">
    <property type="protein sequence ID" value="ENSMUSP00000033979.5"/>
    <property type="gene ID" value="ENSMUSG00000031574.9"/>
</dbReference>
<dbReference type="GeneID" id="20845"/>
<dbReference type="KEGG" id="mmu:20845"/>
<dbReference type="UCSC" id="uc009lhb.1">
    <property type="organism name" value="mouse"/>
</dbReference>
<dbReference type="AGR" id="MGI:102760"/>
<dbReference type="CTD" id="6770"/>
<dbReference type="MGI" id="MGI:102760">
    <property type="gene designation" value="Star"/>
</dbReference>
<dbReference type="VEuPathDB" id="HostDB:ENSMUSG00000031574"/>
<dbReference type="eggNOG" id="KOG3845">
    <property type="taxonomic scope" value="Eukaryota"/>
</dbReference>
<dbReference type="GeneTree" id="ENSGT00940000155477"/>
<dbReference type="HOGENOM" id="CLU_093200_1_0_1"/>
<dbReference type="InParanoid" id="P51557"/>
<dbReference type="OMA" id="PTPSAWI"/>
<dbReference type="OrthoDB" id="74575at2759"/>
<dbReference type="PhylomeDB" id="P51557"/>
<dbReference type="TreeFam" id="TF313869"/>
<dbReference type="Reactome" id="R-MMU-196108">
    <property type="pathway name" value="Pregnenolone biosynthesis"/>
</dbReference>
<dbReference type="Reactome" id="R-MMU-9837999">
    <property type="pathway name" value="Mitochondrial protein degradation"/>
</dbReference>
<dbReference type="UniPathway" id="UPA00296"/>
<dbReference type="BioGRID-ORCS" id="20845">
    <property type="hits" value="3 hits in 79 CRISPR screens"/>
</dbReference>
<dbReference type="PRO" id="PR:P51557"/>
<dbReference type="Proteomes" id="UP000000589">
    <property type="component" value="Chromosome 8"/>
</dbReference>
<dbReference type="RNAct" id="P51557">
    <property type="molecule type" value="protein"/>
</dbReference>
<dbReference type="Bgee" id="ENSMUSG00000031574">
    <property type="expression patterns" value="Expressed in adrenal gland and 112 other cell types or tissues"/>
</dbReference>
<dbReference type="ExpressionAtlas" id="P51557">
    <property type="expression patterns" value="baseline and differential"/>
</dbReference>
<dbReference type="GO" id="GO:0030061">
    <property type="term" value="C:mitochondrial crista"/>
    <property type="evidence" value="ECO:0007669"/>
    <property type="project" value="Ensembl"/>
</dbReference>
<dbReference type="GO" id="GO:0005739">
    <property type="term" value="C:mitochondrion"/>
    <property type="evidence" value="ECO:0000314"/>
    <property type="project" value="MGI"/>
</dbReference>
<dbReference type="GO" id="GO:0043025">
    <property type="term" value="C:neuronal cell body"/>
    <property type="evidence" value="ECO:0007669"/>
    <property type="project" value="Ensembl"/>
</dbReference>
<dbReference type="GO" id="GO:0015485">
    <property type="term" value="F:cholesterol binding"/>
    <property type="evidence" value="ECO:0000314"/>
    <property type="project" value="MGI"/>
</dbReference>
<dbReference type="GO" id="GO:0120020">
    <property type="term" value="F:cholesterol transfer activity"/>
    <property type="evidence" value="ECO:0007669"/>
    <property type="project" value="InterPro"/>
</dbReference>
<dbReference type="GO" id="GO:0006699">
    <property type="term" value="P:bile acid biosynthetic process"/>
    <property type="evidence" value="ECO:0007669"/>
    <property type="project" value="Ensembl"/>
</dbReference>
<dbReference type="GO" id="GO:0018879">
    <property type="term" value="P:biphenyl metabolic process"/>
    <property type="evidence" value="ECO:0007669"/>
    <property type="project" value="Ensembl"/>
</dbReference>
<dbReference type="GO" id="GO:0071312">
    <property type="term" value="P:cellular response to alkaloid"/>
    <property type="evidence" value="ECO:0007669"/>
    <property type="project" value="Ensembl"/>
</dbReference>
<dbReference type="GO" id="GO:0071236">
    <property type="term" value="P:cellular response to antibiotic"/>
    <property type="evidence" value="ECO:0007669"/>
    <property type="project" value="Ensembl"/>
</dbReference>
<dbReference type="GO" id="GO:0071276">
    <property type="term" value="P:cellular response to cadmium ion"/>
    <property type="evidence" value="ECO:0007669"/>
    <property type="project" value="Ensembl"/>
</dbReference>
<dbReference type="GO" id="GO:0071320">
    <property type="term" value="P:cellular response to cAMP"/>
    <property type="evidence" value="ECO:0007669"/>
    <property type="project" value="Ensembl"/>
</dbReference>
<dbReference type="GO" id="GO:0071549">
    <property type="term" value="P:cellular response to dexamethasone stimulus"/>
    <property type="evidence" value="ECO:0007669"/>
    <property type="project" value="Ensembl"/>
</dbReference>
<dbReference type="GO" id="GO:0071872">
    <property type="term" value="P:cellular response to epinephrine stimulus"/>
    <property type="evidence" value="ECO:0007669"/>
    <property type="project" value="Ensembl"/>
</dbReference>
<dbReference type="GO" id="GO:0044344">
    <property type="term" value="P:cellular response to fibroblast growth factor stimulus"/>
    <property type="evidence" value="ECO:0007669"/>
    <property type="project" value="Ensembl"/>
</dbReference>
<dbReference type="GO" id="GO:0071372">
    <property type="term" value="P:cellular response to follicle-stimulating hormone stimulus"/>
    <property type="evidence" value="ECO:0007669"/>
    <property type="project" value="Ensembl"/>
</dbReference>
<dbReference type="GO" id="GO:0071333">
    <property type="term" value="P:cellular response to glucose stimulus"/>
    <property type="evidence" value="ECO:0007669"/>
    <property type="project" value="Ensembl"/>
</dbReference>
<dbReference type="GO" id="GO:0071378">
    <property type="term" value="P:cellular response to growth hormone stimulus"/>
    <property type="evidence" value="ECO:0007669"/>
    <property type="project" value="Ensembl"/>
</dbReference>
<dbReference type="GO" id="GO:0032869">
    <property type="term" value="P:cellular response to insulin stimulus"/>
    <property type="evidence" value="ECO:0007669"/>
    <property type="project" value="Ensembl"/>
</dbReference>
<dbReference type="GO" id="GO:0035457">
    <property type="term" value="P:cellular response to interferon-alpha"/>
    <property type="evidence" value="ECO:0007669"/>
    <property type="project" value="Ensembl"/>
</dbReference>
<dbReference type="GO" id="GO:0071222">
    <property type="term" value="P:cellular response to lipopolysaccharide"/>
    <property type="evidence" value="ECO:0007669"/>
    <property type="project" value="Ensembl"/>
</dbReference>
<dbReference type="GO" id="GO:0071373">
    <property type="term" value="P:cellular response to luteinizing hormone stimulus"/>
    <property type="evidence" value="ECO:0007669"/>
    <property type="project" value="Ensembl"/>
</dbReference>
<dbReference type="GO" id="GO:0071560">
    <property type="term" value="P:cellular response to transforming growth factor beta stimulus"/>
    <property type="evidence" value="ECO:0007669"/>
    <property type="project" value="Ensembl"/>
</dbReference>
<dbReference type="GO" id="GO:0071346">
    <property type="term" value="P:cellular response to type II interferon"/>
    <property type="evidence" value="ECO:0007669"/>
    <property type="project" value="Ensembl"/>
</dbReference>
<dbReference type="GO" id="GO:0008203">
    <property type="term" value="P:cholesterol metabolic process"/>
    <property type="evidence" value="ECO:0007669"/>
    <property type="project" value="UniProtKB-UniPathway"/>
</dbReference>
<dbReference type="GO" id="GO:0007623">
    <property type="term" value="P:circadian rhythm"/>
    <property type="evidence" value="ECO:0007669"/>
    <property type="project" value="Ensembl"/>
</dbReference>
<dbReference type="GO" id="GO:0018894">
    <property type="term" value="P:dibenzo-p-dioxin metabolic process"/>
    <property type="evidence" value="ECO:0007669"/>
    <property type="project" value="Ensembl"/>
</dbReference>
<dbReference type="GO" id="GO:0016101">
    <property type="term" value="P:diterpenoid metabolic process"/>
    <property type="evidence" value="ECO:0007669"/>
    <property type="project" value="Ensembl"/>
</dbReference>
<dbReference type="GO" id="GO:0006703">
    <property type="term" value="P:estrogen biosynthetic process"/>
    <property type="evidence" value="ECO:0007669"/>
    <property type="project" value="Ensembl"/>
</dbReference>
<dbReference type="GO" id="GO:0008211">
    <property type="term" value="P:glucocorticoid metabolic process"/>
    <property type="evidence" value="ECO:0000315"/>
    <property type="project" value="MGI"/>
</dbReference>
<dbReference type="GO" id="GO:0017143">
    <property type="term" value="P:insecticide metabolic process"/>
    <property type="evidence" value="ECO:0007669"/>
    <property type="project" value="Ensembl"/>
</dbReference>
<dbReference type="GO" id="GO:0032367">
    <property type="term" value="P:intracellular cholesterol transport"/>
    <property type="evidence" value="ECO:0007669"/>
    <property type="project" value="Ensembl"/>
</dbReference>
<dbReference type="GO" id="GO:0006629">
    <property type="term" value="P:lipid metabolic process"/>
    <property type="evidence" value="ECO:0000315"/>
    <property type="project" value="MGI"/>
</dbReference>
<dbReference type="GO" id="GO:0008584">
    <property type="term" value="P:male gonad development"/>
    <property type="evidence" value="ECO:0007669"/>
    <property type="project" value="Ensembl"/>
</dbReference>
<dbReference type="GO" id="GO:0043524">
    <property type="term" value="P:negative regulation of neuron apoptotic process"/>
    <property type="evidence" value="ECO:0007669"/>
    <property type="project" value="Ensembl"/>
</dbReference>
<dbReference type="GO" id="GO:0018958">
    <property type="term" value="P:phenol-containing compound metabolic process"/>
    <property type="evidence" value="ECO:0007669"/>
    <property type="project" value="Ensembl"/>
</dbReference>
<dbReference type="GO" id="GO:0018963">
    <property type="term" value="P:phthalate metabolic process"/>
    <property type="evidence" value="ECO:0007669"/>
    <property type="project" value="Ensembl"/>
</dbReference>
<dbReference type="GO" id="GO:0070859">
    <property type="term" value="P:positive regulation of bile acid biosynthetic process"/>
    <property type="evidence" value="ECO:0007669"/>
    <property type="project" value="Ensembl"/>
</dbReference>
<dbReference type="GO" id="GO:0010628">
    <property type="term" value="P:positive regulation of gene expression"/>
    <property type="evidence" value="ECO:0007669"/>
    <property type="project" value="Ensembl"/>
</dbReference>
<dbReference type="GO" id="GO:0050769">
    <property type="term" value="P:positive regulation of neurogenesis"/>
    <property type="evidence" value="ECO:0007669"/>
    <property type="project" value="Ensembl"/>
</dbReference>
<dbReference type="GO" id="GO:0048168">
    <property type="term" value="P:regulation of neuronal synaptic plasticity"/>
    <property type="evidence" value="ECO:0007669"/>
    <property type="project" value="Ensembl"/>
</dbReference>
<dbReference type="GO" id="GO:0050810">
    <property type="term" value="P:regulation of steroid biosynthetic process"/>
    <property type="evidence" value="ECO:0000314"/>
    <property type="project" value="MGI"/>
</dbReference>
<dbReference type="GO" id="GO:0014823">
    <property type="term" value="P:response to activity"/>
    <property type="evidence" value="ECO:0007669"/>
    <property type="project" value="Ensembl"/>
</dbReference>
<dbReference type="GO" id="GO:0080021">
    <property type="term" value="P:response to benzoic acid"/>
    <property type="evidence" value="ECO:0007669"/>
    <property type="project" value="Ensembl"/>
</dbReference>
<dbReference type="GO" id="GO:0051412">
    <property type="term" value="P:response to corticosterone"/>
    <property type="evidence" value="ECO:0007669"/>
    <property type="project" value="Ensembl"/>
</dbReference>
<dbReference type="GO" id="GO:0043627">
    <property type="term" value="P:response to estrogen"/>
    <property type="evidence" value="ECO:0007669"/>
    <property type="project" value="Ensembl"/>
</dbReference>
<dbReference type="GO" id="GO:0045471">
    <property type="term" value="P:response to ethanol"/>
    <property type="evidence" value="ECO:0007669"/>
    <property type="project" value="Ensembl"/>
</dbReference>
<dbReference type="GO" id="GO:0060992">
    <property type="term" value="P:response to fungicide"/>
    <property type="evidence" value="ECO:0007669"/>
    <property type="project" value="Ensembl"/>
</dbReference>
<dbReference type="GO" id="GO:0009635">
    <property type="term" value="P:response to herbicide"/>
    <property type="evidence" value="ECO:0007669"/>
    <property type="project" value="Ensembl"/>
</dbReference>
<dbReference type="GO" id="GO:0042542">
    <property type="term" value="P:response to hydrogen peroxide"/>
    <property type="evidence" value="ECO:0007669"/>
    <property type="project" value="Ensembl"/>
</dbReference>
<dbReference type="GO" id="GO:0010212">
    <property type="term" value="P:response to ionizing radiation"/>
    <property type="evidence" value="ECO:0007669"/>
    <property type="project" value="Ensembl"/>
</dbReference>
<dbReference type="GO" id="GO:0010288">
    <property type="term" value="P:response to lead ion"/>
    <property type="evidence" value="ECO:0007669"/>
    <property type="project" value="Ensembl"/>
</dbReference>
<dbReference type="GO" id="GO:0044321">
    <property type="term" value="P:response to leptin"/>
    <property type="evidence" value="ECO:0007669"/>
    <property type="project" value="Ensembl"/>
</dbReference>
<dbReference type="GO" id="GO:0035094">
    <property type="term" value="P:response to nicotine"/>
    <property type="evidence" value="ECO:0007669"/>
    <property type="project" value="Ensembl"/>
</dbReference>
<dbReference type="GO" id="GO:0007584">
    <property type="term" value="P:response to nutrient"/>
    <property type="evidence" value="ECO:0007669"/>
    <property type="project" value="Ensembl"/>
</dbReference>
<dbReference type="GO" id="GO:0032526">
    <property type="term" value="P:response to retinoic acid"/>
    <property type="evidence" value="ECO:0007669"/>
    <property type="project" value="Ensembl"/>
</dbReference>
<dbReference type="GO" id="GO:0061370">
    <property type="term" value="P:testosterone biosynthetic process"/>
    <property type="evidence" value="ECO:0007669"/>
    <property type="project" value="Ensembl"/>
</dbReference>
<dbReference type="CDD" id="cd08905">
    <property type="entry name" value="START_STARD1-like"/>
    <property type="match status" value="1"/>
</dbReference>
<dbReference type="FunFam" id="3.30.530.20:FF:000015">
    <property type="entry name" value="Steroidogenic acute regulatory protein, mitochondrial"/>
    <property type="match status" value="1"/>
</dbReference>
<dbReference type="Gene3D" id="3.30.530.20">
    <property type="match status" value="1"/>
</dbReference>
<dbReference type="InterPro" id="IPR029866">
    <property type="entry name" value="StAR"/>
</dbReference>
<dbReference type="InterPro" id="IPR000799">
    <property type="entry name" value="StAR-like"/>
</dbReference>
<dbReference type="InterPro" id="IPR023393">
    <property type="entry name" value="START-like_dom_sf"/>
</dbReference>
<dbReference type="InterPro" id="IPR002913">
    <property type="entry name" value="START_lipid-bd_dom"/>
</dbReference>
<dbReference type="PANTHER" id="PTHR46489">
    <property type="entry name" value="STEROIDOGENIC ACUTE REGULATORY PROTEIN, MITOCHONDRIAL"/>
    <property type="match status" value="1"/>
</dbReference>
<dbReference type="PANTHER" id="PTHR46489:SF1">
    <property type="entry name" value="STEROIDOGENIC ACUTE REGULATORY PROTEIN, MITOCHONDRIAL"/>
    <property type="match status" value="1"/>
</dbReference>
<dbReference type="Pfam" id="PF01852">
    <property type="entry name" value="START"/>
    <property type="match status" value="1"/>
</dbReference>
<dbReference type="PRINTS" id="PR00978">
    <property type="entry name" value="STARPROTEIN"/>
</dbReference>
<dbReference type="SMART" id="SM00234">
    <property type="entry name" value="START"/>
    <property type="match status" value="1"/>
</dbReference>
<dbReference type="SUPFAM" id="SSF55961">
    <property type="entry name" value="Bet v1-like"/>
    <property type="match status" value="1"/>
</dbReference>
<dbReference type="PROSITE" id="PS50848">
    <property type="entry name" value="START"/>
    <property type="match status" value="1"/>
</dbReference>
<protein>
    <recommendedName>
        <fullName>Steroidogenic acute regulatory protein, mitochondrial</fullName>
        <shortName>StAR</shortName>
    </recommendedName>
    <alternativeName>
        <fullName>Luteinizing hormone-induced protein</fullName>
    </alternativeName>
    <alternativeName>
        <fullName>START domain-containing protein 1</fullName>
        <shortName>StARD1</shortName>
    </alternativeName>
</protein>
<name>STAR_MOUSE</name>
<evidence type="ECO:0000250" key="1">
    <source>
        <dbReference type="UniProtKB" id="P49675"/>
    </source>
</evidence>
<evidence type="ECO:0000250" key="2">
    <source>
        <dbReference type="UniProtKB" id="P79245"/>
    </source>
</evidence>
<evidence type="ECO:0000255" key="3">
    <source>
        <dbReference type="PROSITE-ProRule" id="PRU00197"/>
    </source>
</evidence>
<evidence type="ECO:0000269" key="4">
    <source>
    </source>
</evidence>
<evidence type="ECO:0000269" key="5">
    <source>
    </source>
</evidence>
<evidence type="ECO:0000269" key="6">
    <source>
    </source>
</evidence>
<evidence type="ECO:0000305" key="7"/>
<sequence>MFLATFKLCAGSSYRHMRNMKGLRHQAVLAIGQELNWRALGDSSPGWMGQVRRRSSLLGSQLEATLYSDQELSYIQQGEVAMQKALGILNNQEGWKKESQQENGDEVLSKMVPDVGKVFRLEVVVDQPMDRLYEELVDRMEAMGEWNPNVKEIKVLQRIGKDTVITHELAAAAAGNLVGPRDFVSVRCTKRRGSTCVLAGMATHFGEMPEQSGVIRAEHGPTCMVLHPLAGSPSKTKLTWLLSIDLKGWLPKTIINQVLSQTQIEFANHLRKRLEASPASEAQC</sequence>
<gene>
    <name type="primary">Star</name>
</gene>
<keyword id="KW-0903">Direct protein sequencing</keyword>
<keyword id="KW-0445">Lipid transport</keyword>
<keyword id="KW-0446">Lipid-binding</keyword>
<keyword id="KW-0496">Mitochondrion</keyword>
<keyword id="KW-0597">Phosphoprotein</keyword>
<keyword id="KW-1185">Reference proteome</keyword>
<keyword id="KW-0755">Steroidogenesis</keyword>
<keyword id="KW-0809">Transit peptide</keyword>
<keyword id="KW-0813">Transport</keyword>